<feature type="chain" id="PRO_0000188139" description="ATP synthase epsilon chain">
    <location>
        <begin position="1"/>
        <end position="138"/>
    </location>
</feature>
<accession>Q74GX9</accession>
<organism>
    <name type="scientific">Geobacter sulfurreducens (strain ATCC 51573 / DSM 12127 / PCA)</name>
    <dbReference type="NCBI Taxonomy" id="243231"/>
    <lineage>
        <taxon>Bacteria</taxon>
        <taxon>Pseudomonadati</taxon>
        <taxon>Thermodesulfobacteriota</taxon>
        <taxon>Desulfuromonadia</taxon>
        <taxon>Geobacterales</taxon>
        <taxon>Geobacteraceae</taxon>
        <taxon>Geobacter</taxon>
    </lineage>
</organism>
<comment type="function">
    <text evidence="1">Produces ATP from ADP in the presence of a proton gradient across the membrane.</text>
</comment>
<comment type="subunit">
    <text>F-type ATPases have 2 components, CF(1) - the catalytic core - and CF(0) - the membrane proton channel. CF(1) has five subunits: alpha(3), beta(3), gamma(1), delta(1), epsilon(1). CF(0) has three main subunits: a, b and c.</text>
</comment>
<comment type="subcellular location">
    <subcellularLocation>
        <location evidence="1">Cell inner membrane</location>
        <topology evidence="1">Peripheral membrane protein</topology>
    </subcellularLocation>
</comment>
<comment type="similarity">
    <text evidence="1">Belongs to the ATPase epsilon chain family.</text>
</comment>
<sequence>MAEKLKVDLVTPYKKILSEEVDEITATGALGEFSVLPGHAPFLTSLKIGELTYKKSGQIVHLALNWGYFEVEDDKVTVLVETAERADEIDLERAKAALGRAEAALKKLSPEDKDYRVMEAALERALIRMQVAGKAARK</sequence>
<evidence type="ECO:0000255" key="1">
    <source>
        <dbReference type="HAMAP-Rule" id="MF_00530"/>
    </source>
</evidence>
<gene>
    <name evidence="1" type="primary">atpC</name>
    <name type="ordered locus">GSU0114</name>
</gene>
<protein>
    <recommendedName>
        <fullName evidence="1">ATP synthase epsilon chain</fullName>
    </recommendedName>
    <alternativeName>
        <fullName evidence="1">ATP synthase F1 sector epsilon subunit</fullName>
    </alternativeName>
    <alternativeName>
        <fullName evidence="1">F-ATPase epsilon subunit</fullName>
    </alternativeName>
</protein>
<keyword id="KW-0066">ATP synthesis</keyword>
<keyword id="KW-0997">Cell inner membrane</keyword>
<keyword id="KW-1003">Cell membrane</keyword>
<keyword id="KW-0139">CF(1)</keyword>
<keyword id="KW-0375">Hydrogen ion transport</keyword>
<keyword id="KW-0406">Ion transport</keyword>
<keyword id="KW-0472">Membrane</keyword>
<keyword id="KW-1185">Reference proteome</keyword>
<keyword id="KW-0813">Transport</keyword>
<proteinExistence type="inferred from homology"/>
<name>ATPE_GEOSL</name>
<dbReference type="EMBL" id="AE017180">
    <property type="protein sequence ID" value="AAR33449.1"/>
    <property type="molecule type" value="Genomic_DNA"/>
</dbReference>
<dbReference type="RefSeq" id="NP_951176.1">
    <property type="nucleotide sequence ID" value="NC_002939.5"/>
</dbReference>
<dbReference type="RefSeq" id="WP_010940790.1">
    <property type="nucleotide sequence ID" value="NC_002939.5"/>
</dbReference>
<dbReference type="SMR" id="Q74GX9"/>
<dbReference type="FunCoup" id="Q74GX9">
    <property type="interactions" value="379"/>
</dbReference>
<dbReference type="STRING" id="243231.GSU0114"/>
<dbReference type="EnsemblBacteria" id="AAR33449">
    <property type="protein sequence ID" value="AAR33449"/>
    <property type="gene ID" value="GSU0114"/>
</dbReference>
<dbReference type="KEGG" id="gsu:GSU0114"/>
<dbReference type="PATRIC" id="fig|243231.5.peg.114"/>
<dbReference type="eggNOG" id="COG0355">
    <property type="taxonomic scope" value="Bacteria"/>
</dbReference>
<dbReference type="HOGENOM" id="CLU_084338_1_3_7"/>
<dbReference type="InParanoid" id="Q74GX9"/>
<dbReference type="OrthoDB" id="9799969at2"/>
<dbReference type="Proteomes" id="UP000000577">
    <property type="component" value="Chromosome"/>
</dbReference>
<dbReference type="GO" id="GO:0005886">
    <property type="term" value="C:plasma membrane"/>
    <property type="evidence" value="ECO:0007669"/>
    <property type="project" value="UniProtKB-SubCell"/>
</dbReference>
<dbReference type="GO" id="GO:0045259">
    <property type="term" value="C:proton-transporting ATP synthase complex"/>
    <property type="evidence" value="ECO:0007669"/>
    <property type="project" value="UniProtKB-KW"/>
</dbReference>
<dbReference type="GO" id="GO:0005524">
    <property type="term" value="F:ATP binding"/>
    <property type="evidence" value="ECO:0007669"/>
    <property type="project" value="UniProtKB-UniRule"/>
</dbReference>
<dbReference type="GO" id="GO:0046933">
    <property type="term" value="F:proton-transporting ATP synthase activity, rotational mechanism"/>
    <property type="evidence" value="ECO:0007669"/>
    <property type="project" value="UniProtKB-UniRule"/>
</dbReference>
<dbReference type="GO" id="GO:0015986">
    <property type="term" value="P:proton motive force-driven ATP synthesis"/>
    <property type="evidence" value="ECO:0000318"/>
    <property type="project" value="GO_Central"/>
</dbReference>
<dbReference type="CDD" id="cd12152">
    <property type="entry name" value="F1-ATPase_delta"/>
    <property type="match status" value="1"/>
</dbReference>
<dbReference type="FunFam" id="1.20.5.440:FF:000001">
    <property type="entry name" value="ATP synthase epsilon chain"/>
    <property type="match status" value="1"/>
</dbReference>
<dbReference type="FunFam" id="2.60.15.10:FF:000001">
    <property type="entry name" value="ATP synthase epsilon chain"/>
    <property type="match status" value="1"/>
</dbReference>
<dbReference type="Gene3D" id="1.20.5.440">
    <property type="entry name" value="ATP synthase delta/epsilon subunit, C-terminal domain"/>
    <property type="match status" value="1"/>
</dbReference>
<dbReference type="Gene3D" id="2.60.15.10">
    <property type="entry name" value="F0F1 ATP synthase delta/epsilon subunit, N-terminal"/>
    <property type="match status" value="1"/>
</dbReference>
<dbReference type="HAMAP" id="MF_00530">
    <property type="entry name" value="ATP_synth_epsil_bac"/>
    <property type="match status" value="1"/>
</dbReference>
<dbReference type="InterPro" id="IPR001469">
    <property type="entry name" value="ATP_synth_F1_dsu/esu"/>
</dbReference>
<dbReference type="InterPro" id="IPR020546">
    <property type="entry name" value="ATP_synth_F1_dsu/esu_N"/>
</dbReference>
<dbReference type="InterPro" id="IPR020547">
    <property type="entry name" value="ATP_synth_F1_esu_C"/>
</dbReference>
<dbReference type="InterPro" id="IPR036771">
    <property type="entry name" value="ATPsynth_dsu/esu_N"/>
</dbReference>
<dbReference type="NCBIfam" id="TIGR01216">
    <property type="entry name" value="ATP_synt_epsi"/>
    <property type="match status" value="1"/>
</dbReference>
<dbReference type="NCBIfam" id="NF009980">
    <property type="entry name" value="PRK13446.1"/>
    <property type="match status" value="1"/>
</dbReference>
<dbReference type="PANTHER" id="PTHR13822">
    <property type="entry name" value="ATP SYNTHASE DELTA/EPSILON CHAIN"/>
    <property type="match status" value="1"/>
</dbReference>
<dbReference type="PANTHER" id="PTHR13822:SF10">
    <property type="entry name" value="ATP SYNTHASE EPSILON CHAIN, CHLOROPLASTIC"/>
    <property type="match status" value="1"/>
</dbReference>
<dbReference type="Pfam" id="PF00401">
    <property type="entry name" value="ATP-synt_DE"/>
    <property type="match status" value="1"/>
</dbReference>
<dbReference type="Pfam" id="PF02823">
    <property type="entry name" value="ATP-synt_DE_N"/>
    <property type="match status" value="1"/>
</dbReference>
<dbReference type="SUPFAM" id="SSF51344">
    <property type="entry name" value="Epsilon subunit of F1F0-ATP synthase N-terminal domain"/>
    <property type="match status" value="1"/>
</dbReference>
<reference key="1">
    <citation type="journal article" date="2003" name="Science">
        <title>Genome of Geobacter sulfurreducens: metal reduction in subsurface environments.</title>
        <authorList>
            <person name="Methe B.A."/>
            <person name="Nelson K.E."/>
            <person name="Eisen J.A."/>
            <person name="Paulsen I.T."/>
            <person name="Nelson W.C."/>
            <person name="Heidelberg J.F."/>
            <person name="Wu D."/>
            <person name="Wu M."/>
            <person name="Ward N.L."/>
            <person name="Beanan M.J."/>
            <person name="Dodson R.J."/>
            <person name="Madupu R."/>
            <person name="Brinkac L.M."/>
            <person name="Daugherty S.C."/>
            <person name="DeBoy R.T."/>
            <person name="Durkin A.S."/>
            <person name="Gwinn M.L."/>
            <person name="Kolonay J.F."/>
            <person name="Sullivan S.A."/>
            <person name="Haft D.H."/>
            <person name="Selengut J."/>
            <person name="Davidsen T.M."/>
            <person name="Zafar N."/>
            <person name="White O."/>
            <person name="Tran B."/>
            <person name="Romero C."/>
            <person name="Forberger H.A."/>
            <person name="Weidman J.F."/>
            <person name="Khouri H.M."/>
            <person name="Feldblyum T.V."/>
            <person name="Utterback T.R."/>
            <person name="Van Aken S.E."/>
            <person name="Lovley D.R."/>
            <person name="Fraser C.M."/>
        </authorList>
    </citation>
    <scope>NUCLEOTIDE SEQUENCE [LARGE SCALE GENOMIC DNA]</scope>
    <source>
        <strain>ATCC 51573 / DSM 12127 / PCA</strain>
    </source>
</reference>